<name>CYB_SORIS</name>
<keyword id="KW-0249">Electron transport</keyword>
<keyword id="KW-0349">Heme</keyword>
<keyword id="KW-0408">Iron</keyword>
<keyword id="KW-0472">Membrane</keyword>
<keyword id="KW-0479">Metal-binding</keyword>
<keyword id="KW-0496">Mitochondrion</keyword>
<keyword id="KW-0999">Mitochondrion inner membrane</keyword>
<keyword id="KW-0679">Respiratory chain</keyword>
<keyword id="KW-0812">Transmembrane</keyword>
<keyword id="KW-1133">Transmembrane helix</keyword>
<keyword id="KW-0813">Transport</keyword>
<keyword id="KW-0830">Ubiquinone</keyword>
<geneLocation type="mitochondrion"/>
<sequence>MTNLRKTHPLMKIVNSSFIDLPAPSNISSWWNFGSLLGVCLIIQILTGLFLAMHYTSDTMTAFSSVTHICRDVNYGWLIRYLHANGASMFFICLFLHVGRGLYYGSYMYLETWNIGVLLLFAVMATAFMGYVLPWGQMSFWGATVITNLLSAIPYIGSDLVEWIWGGFSVDKATLTRFFAFHFILPFIIAALAGVHLLFLHETGSNNPSGLCSDADKIPFHPYYTIKDILGVLLLILVLTSLVLFSPDLLGDPDNYTLANPLNTPPHIKPEWYFLFAYAILRSIPNKLGGVLALVLSILVLALVPFLHTSKQRSMMFRPFSQCFFWILVADLLTLTWIGGQPVEHPFIIIGQLASILYFLLILVIMPITSLFENNLLKW</sequence>
<dbReference type="EMBL" id="D85361">
    <property type="protein sequence ID" value="BAA21354.1"/>
    <property type="molecule type" value="Genomic_DNA"/>
</dbReference>
<dbReference type="EMBL" id="AJ000437">
    <property type="protein sequence ID" value="CAA04081.1"/>
    <property type="molecule type" value="Genomic_DNA"/>
</dbReference>
<dbReference type="EMBL" id="AJ000438">
    <property type="protein sequence ID" value="CAA04082.1"/>
    <property type="molecule type" value="Genomic_DNA"/>
</dbReference>
<dbReference type="SMR" id="O80005"/>
<dbReference type="GO" id="GO:0005743">
    <property type="term" value="C:mitochondrial inner membrane"/>
    <property type="evidence" value="ECO:0007669"/>
    <property type="project" value="UniProtKB-SubCell"/>
</dbReference>
<dbReference type="GO" id="GO:0045275">
    <property type="term" value="C:respiratory chain complex III"/>
    <property type="evidence" value="ECO:0007669"/>
    <property type="project" value="InterPro"/>
</dbReference>
<dbReference type="GO" id="GO:0046872">
    <property type="term" value="F:metal ion binding"/>
    <property type="evidence" value="ECO:0007669"/>
    <property type="project" value="UniProtKB-KW"/>
</dbReference>
<dbReference type="GO" id="GO:0008121">
    <property type="term" value="F:ubiquinol-cytochrome-c reductase activity"/>
    <property type="evidence" value="ECO:0007669"/>
    <property type="project" value="InterPro"/>
</dbReference>
<dbReference type="GO" id="GO:0006122">
    <property type="term" value="P:mitochondrial electron transport, ubiquinol to cytochrome c"/>
    <property type="evidence" value="ECO:0007669"/>
    <property type="project" value="TreeGrafter"/>
</dbReference>
<dbReference type="CDD" id="cd00290">
    <property type="entry name" value="cytochrome_b_C"/>
    <property type="match status" value="1"/>
</dbReference>
<dbReference type="CDD" id="cd00284">
    <property type="entry name" value="Cytochrome_b_N"/>
    <property type="match status" value="1"/>
</dbReference>
<dbReference type="FunFam" id="1.20.810.10:FF:000002">
    <property type="entry name" value="Cytochrome b"/>
    <property type="match status" value="1"/>
</dbReference>
<dbReference type="Gene3D" id="1.20.810.10">
    <property type="entry name" value="Cytochrome Bc1 Complex, Chain C"/>
    <property type="match status" value="1"/>
</dbReference>
<dbReference type="InterPro" id="IPR005798">
    <property type="entry name" value="Cyt_b/b6_C"/>
</dbReference>
<dbReference type="InterPro" id="IPR036150">
    <property type="entry name" value="Cyt_b/b6_C_sf"/>
</dbReference>
<dbReference type="InterPro" id="IPR005797">
    <property type="entry name" value="Cyt_b/b6_N"/>
</dbReference>
<dbReference type="InterPro" id="IPR027387">
    <property type="entry name" value="Cytb/b6-like_sf"/>
</dbReference>
<dbReference type="InterPro" id="IPR030689">
    <property type="entry name" value="Cytochrome_b"/>
</dbReference>
<dbReference type="InterPro" id="IPR048260">
    <property type="entry name" value="Cytochrome_b_C_euk/bac"/>
</dbReference>
<dbReference type="InterPro" id="IPR048259">
    <property type="entry name" value="Cytochrome_b_N_euk/bac"/>
</dbReference>
<dbReference type="InterPro" id="IPR016174">
    <property type="entry name" value="Di-haem_cyt_TM"/>
</dbReference>
<dbReference type="PANTHER" id="PTHR19271">
    <property type="entry name" value="CYTOCHROME B"/>
    <property type="match status" value="1"/>
</dbReference>
<dbReference type="PANTHER" id="PTHR19271:SF16">
    <property type="entry name" value="CYTOCHROME B"/>
    <property type="match status" value="1"/>
</dbReference>
<dbReference type="Pfam" id="PF00032">
    <property type="entry name" value="Cytochrom_B_C"/>
    <property type="match status" value="1"/>
</dbReference>
<dbReference type="Pfam" id="PF00033">
    <property type="entry name" value="Cytochrome_B"/>
    <property type="match status" value="1"/>
</dbReference>
<dbReference type="PIRSF" id="PIRSF038885">
    <property type="entry name" value="COB"/>
    <property type="match status" value="1"/>
</dbReference>
<dbReference type="SUPFAM" id="SSF81648">
    <property type="entry name" value="a domain/subunit of cytochrome bc1 complex (Ubiquinol-cytochrome c reductase)"/>
    <property type="match status" value="1"/>
</dbReference>
<dbReference type="SUPFAM" id="SSF81342">
    <property type="entry name" value="Transmembrane di-heme cytochromes"/>
    <property type="match status" value="1"/>
</dbReference>
<dbReference type="PROSITE" id="PS51003">
    <property type="entry name" value="CYTB_CTER"/>
    <property type="match status" value="1"/>
</dbReference>
<dbReference type="PROSITE" id="PS51002">
    <property type="entry name" value="CYTB_NTER"/>
    <property type="match status" value="1"/>
</dbReference>
<gene>
    <name type="primary">MT-CYB</name>
    <name type="synonym">COB</name>
    <name type="synonym">CYTB</name>
    <name type="synonym">MTCYB</name>
</gene>
<proteinExistence type="inferred from homology"/>
<protein>
    <recommendedName>
        <fullName>Cytochrome b</fullName>
    </recommendedName>
    <alternativeName>
        <fullName>Complex III subunit 3</fullName>
    </alternativeName>
    <alternativeName>
        <fullName>Complex III subunit III</fullName>
    </alternativeName>
    <alternativeName>
        <fullName>Cytochrome b-c1 complex subunit 3</fullName>
    </alternativeName>
    <alternativeName>
        <fullName>Ubiquinol-cytochrome-c reductase complex cytochrome b subunit</fullName>
    </alternativeName>
</protein>
<accession>O80005</accession>
<accession>O21415</accession>
<evidence type="ECO:0000250" key="1"/>
<evidence type="ECO:0000250" key="2">
    <source>
        <dbReference type="UniProtKB" id="P00157"/>
    </source>
</evidence>
<evidence type="ECO:0000255" key="3">
    <source>
        <dbReference type="PROSITE-ProRule" id="PRU00967"/>
    </source>
</evidence>
<evidence type="ECO:0000255" key="4">
    <source>
        <dbReference type="PROSITE-ProRule" id="PRU00968"/>
    </source>
</evidence>
<comment type="function">
    <text evidence="2">Component of the ubiquinol-cytochrome c reductase complex (complex III or cytochrome b-c1 complex) that is part of the mitochondrial respiratory chain. The b-c1 complex mediates electron transfer from ubiquinol to cytochrome c. Contributes to the generation of a proton gradient across the mitochondrial membrane that is then used for ATP synthesis.</text>
</comment>
<comment type="cofactor">
    <cofactor evidence="2">
        <name>heme b</name>
        <dbReference type="ChEBI" id="CHEBI:60344"/>
    </cofactor>
    <text evidence="2">Binds 2 heme b groups non-covalently.</text>
</comment>
<comment type="subunit">
    <text evidence="2">The cytochrome bc1 complex contains 11 subunits: 3 respiratory subunits (MT-CYB, CYC1 and UQCRFS1), 2 core proteins (UQCRC1 and UQCRC2) and 6 low-molecular weight proteins (UQCRH/QCR6, UQCRB/QCR7, UQCRQ/QCR8, UQCR10/QCR9, UQCR11/QCR10 and a cleavage product of UQCRFS1). This cytochrome bc1 complex then forms a dimer.</text>
</comment>
<comment type="subcellular location">
    <subcellularLocation>
        <location evidence="2">Mitochondrion inner membrane</location>
        <topology evidence="2">Multi-pass membrane protein</topology>
    </subcellularLocation>
</comment>
<comment type="miscellaneous">
    <text evidence="1">Heme 1 (or BL or b562) is low-potential and absorbs at about 562 nm, and heme 2 (or BH or b566) is high-potential and absorbs at about 566 nm.</text>
</comment>
<comment type="similarity">
    <text evidence="3 4">Belongs to the cytochrome b family.</text>
</comment>
<comment type="caution">
    <text evidence="2">The full-length protein contains only eight transmembrane helices, not nine as predicted by bioinformatics tools.</text>
</comment>
<reference key="1">
    <citation type="journal article" date="1997" name="Zool. Sci.">
        <title>Molecular phylogeny from nucleotide sequences of the mitochondrial cytochrome b gene and evolutionary history of Eurasian soricine shrews (Mammalia, Insectivora).</title>
        <authorList>
            <person name="Ohdachi S."/>
            <person name="Masuda R."/>
            <person name="Abe H."/>
            <person name="Adachi J."/>
            <person name="Dokuchaev N.E."/>
            <person name="Haukisalmi V."/>
            <person name="Yoshida M.C."/>
        </authorList>
    </citation>
    <scope>NUCLEOTIDE SEQUENCE [GENOMIC DNA] OF 1-134</scope>
    <source>
        <strain>Isolate N36/95</strain>
        <tissue>Muscle</tissue>
    </source>
</reference>
<reference key="2">
    <citation type="journal article" date="1999" name="Mol. Phylogenet. Evol.">
        <title>Molecular phylogeny and evolution of Sorex shrews (Soricidae: Insectivora) inferred from mitochondrial DNA sequence data.</title>
        <authorList>
            <person name="Fumagalli L."/>
            <person name="Taberlet P."/>
            <person name="Stewart D.T."/>
            <person name="Gielly L."/>
            <person name="Hausser J."/>
            <person name="Vogel P."/>
        </authorList>
    </citation>
    <scope>NUCLEOTIDE SEQUENCE [GENOMIC DNA] OF 44-379</scope>
</reference>
<organism>
    <name type="scientific">Sorex isodon</name>
    <name type="common">Taiga shrew</name>
    <dbReference type="NCBI Taxonomy" id="62281"/>
    <lineage>
        <taxon>Eukaryota</taxon>
        <taxon>Metazoa</taxon>
        <taxon>Chordata</taxon>
        <taxon>Craniata</taxon>
        <taxon>Vertebrata</taxon>
        <taxon>Euteleostomi</taxon>
        <taxon>Mammalia</taxon>
        <taxon>Eutheria</taxon>
        <taxon>Laurasiatheria</taxon>
        <taxon>Eulipotyphla</taxon>
        <taxon>Soricidae</taxon>
        <taxon>Soricinae</taxon>
        <taxon>Sorex</taxon>
    </lineage>
</organism>
<feature type="chain" id="PRO_0000061566" description="Cytochrome b">
    <location>
        <begin position="1"/>
        <end position="379"/>
    </location>
</feature>
<feature type="transmembrane region" description="Helical" evidence="2">
    <location>
        <begin position="33"/>
        <end position="53"/>
    </location>
</feature>
<feature type="transmembrane region" description="Helical" evidence="2">
    <location>
        <begin position="77"/>
        <end position="98"/>
    </location>
</feature>
<feature type="transmembrane region" description="Helical" evidence="2">
    <location>
        <begin position="113"/>
        <end position="133"/>
    </location>
</feature>
<feature type="transmembrane region" description="Helical" evidence="2">
    <location>
        <begin position="178"/>
        <end position="198"/>
    </location>
</feature>
<feature type="transmembrane region" description="Helical" evidence="2">
    <location>
        <begin position="226"/>
        <end position="246"/>
    </location>
</feature>
<feature type="transmembrane region" description="Helical" evidence="2">
    <location>
        <begin position="288"/>
        <end position="308"/>
    </location>
</feature>
<feature type="transmembrane region" description="Helical" evidence="2">
    <location>
        <begin position="320"/>
        <end position="340"/>
    </location>
</feature>
<feature type="transmembrane region" description="Helical" evidence="2">
    <location>
        <begin position="347"/>
        <end position="367"/>
    </location>
</feature>
<feature type="binding site" description="axial binding residue" evidence="2">
    <location>
        <position position="83"/>
    </location>
    <ligand>
        <name>heme b</name>
        <dbReference type="ChEBI" id="CHEBI:60344"/>
        <label>b562</label>
    </ligand>
    <ligandPart>
        <name>Fe</name>
        <dbReference type="ChEBI" id="CHEBI:18248"/>
    </ligandPart>
</feature>
<feature type="binding site" description="axial binding residue" evidence="2">
    <location>
        <position position="97"/>
    </location>
    <ligand>
        <name>heme b</name>
        <dbReference type="ChEBI" id="CHEBI:60344"/>
        <label>b566</label>
    </ligand>
    <ligandPart>
        <name>Fe</name>
        <dbReference type="ChEBI" id="CHEBI:18248"/>
    </ligandPart>
</feature>
<feature type="binding site" description="axial binding residue" evidence="2">
    <location>
        <position position="182"/>
    </location>
    <ligand>
        <name>heme b</name>
        <dbReference type="ChEBI" id="CHEBI:60344"/>
        <label>b562</label>
    </ligand>
    <ligandPart>
        <name>Fe</name>
        <dbReference type="ChEBI" id="CHEBI:18248"/>
    </ligandPart>
</feature>
<feature type="binding site" description="axial binding residue" evidence="2">
    <location>
        <position position="196"/>
    </location>
    <ligand>
        <name>heme b</name>
        <dbReference type="ChEBI" id="CHEBI:60344"/>
        <label>b566</label>
    </ligand>
    <ligandPart>
        <name>Fe</name>
        <dbReference type="ChEBI" id="CHEBI:18248"/>
    </ligandPart>
</feature>
<feature type="binding site" evidence="2">
    <location>
        <position position="201"/>
    </location>
    <ligand>
        <name>a ubiquinone</name>
        <dbReference type="ChEBI" id="CHEBI:16389"/>
    </ligand>
</feature>